<accession>Q9Z2B9</accession>
<accession>Q3U3M8</accession>
<accession>Q91X18</accession>
<keyword id="KW-0067">ATP-binding</keyword>
<keyword id="KW-0395">Inflammatory response</keyword>
<keyword id="KW-0418">Kinase</keyword>
<keyword id="KW-0547">Nucleotide-binding</keyword>
<keyword id="KW-0539">Nucleus</keyword>
<keyword id="KW-0597">Phosphoprotein</keyword>
<keyword id="KW-1185">Reference proteome</keyword>
<keyword id="KW-0677">Repeat</keyword>
<keyword id="KW-0723">Serine/threonine-protein kinase</keyword>
<keyword id="KW-0346">Stress response</keyword>
<keyword id="KW-0808">Transferase</keyword>
<feature type="chain" id="PRO_0000086206" description="Ribosomal protein S6 kinase alpha-4">
    <location>
        <begin position="1"/>
        <end position="773"/>
    </location>
</feature>
<feature type="domain" description="Protein kinase 1" evidence="4">
    <location>
        <begin position="33"/>
        <end position="301"/>
    </location>
</feature>
<feature type="domain" description="AGC-kinase C-terminal" evidence="5">
    <location>
        <begin position="302"/>
        <end position="371"/>
    </location>
</feature>
<feature type="domain" description="Protein kinase 2" evidence="4">
    <location>
        <begin position="417"/>
        <end position="674"/>
    </location>
</feature>
<feature type="region of interest" description="Disordered" evidence="6">
    <location>
        <begin position="674"/>
        <end position="696"/>
    </location>
</feature>
<feature type="region of interest" description="Disordered" evidence="6">
    <location>
        <begin position="728"/>
        <end position="773"/>
    </location>
</feature>
<feature type="active site" description="Proton acceptor" evidence="1">
    <location>
        <position position="161"/>
    </location>
</feature>
<feature type="active site" description="Proton acceptor" evidence="1">
    <location>
        <position position="530"/>
    </location>
</feature>
<feature type="binding site" evidence="4">
    <location>
        <begin position="39"/>
        <end position="47"/>
    </location>
    <ligand>
        <name>ATP</name>
        <dbReference type="ChEBI" id="CHEBI:30616"/>
    </ligand>
</feature>
<feature type="binding site" evidence="4">
    <location>
        <position position="65"/>
    </location>
    <ligand>
        <name>ATP</name>
        <dbReference type="ChEBI" id="CHEBI:30616"/>
    </ligand>
</feature>
<feature type="binding site" evidence="4">
    <location>
        <begin position="417"/>
        <end position="425"/>
    </location>
    <ligand>
        <name>ATP</name>
        <dbReference type="ChEBI" id="CHEBI:30616"/>
    </ligand>
</feature>
<feature type="binding site" evidence="4">
    <location>
        <position position="440"/>
    </location>
    <ligand>
        <name>ATP</name>
        <dbReference type="ChEBI" id="CHEBI:30616"/>
    </ligand>
</feature>
<feature type="modified residue" description="Phosphoserine; by autocatalysis" evidence="1">
    <location>
        <position position="196"/>
    </location>
</feature>
<feature type="modified residue" description="Phosphoserine; by MAPK1, MAPK3 and MAPK14" evidence="10">
    <location>
        <position position="343"/>
    </location>
</feature>
<feature type="modified residue" description="Phosphoserine" evidence="3">
    <location>
        <position position="347"/>
    </location>
</feature>
<feature type="modified residue" description="Phosphoserine; by autocatalysis" evidence="1">
    <location>
        <position position="360"/>
    </location>
</feature>
<feature type="modified residue" description="Phosphoserine; by autocatalysis" evidence="1">
    <location>
        <position position="365"/>
    </location>
</feature>
<feature type="modified residue" description="Phosphothreonine" evidence="3">
    <location>
        <position position="542"/>
    </location>
</feature>
<feature type="modified residue" description="Phosphothreonine; by MAPK1, MAPK3 and MAPK14" evidence="1">
    <location>
        <position position="568"/>
    </location>
</feature>
<feature type="modified residue" description="Phosphoserine" evidence="3">
    <location>
        <position position="634"/>
    </location>
</feature>
<feature type="modified residue" description="Phosphoserine" evidence="3">
    <location>
        <position position="678"/>
    </location>
</feature>
<feature type="modified residue" description="Phosphothreonine" evidence="13">
    <location>
        <position position="687"/>
    </location>
</feature>
<feature type="modified residue" description="Phosphoserine; by autocatalysis" evidence="1">
    <location>
        <position position="737"/>
    </location>
</feature>
<feature type="modified residue" description="Phosphoserine; by autocatalysis" evidence="3 10">
    <location>
        <position position="745"/>
    </location>
</feature>
<feature type="sequence conflict" description="In Ref. 1; AAC67394." evidence="10" ref="1">
    <original>V</original>
    <variation>W</variation>
    <location>
        <position position="307"/>
    </location>
</feature>
<feature type="sequence conflict" description="In Ref. 3; AAH12964." evidence="10" ref="3">
    <original>S</original>
    <variation>P</variation>
    <location>
        <position position="343"/>
    </location>
</feature>
<name>KS6A4_MOUSE</name>
<gene>
    <name type="primary">Rps6ka4</name>
    <name type="synonym">Msk2</name>
</gene>
<protein>
    <recommendedName>
        <fullName>Ribosomal protein S6 kinase alpha-4</fullName>
        <shortName>S6K-alpha-4</shortName>
        <ecNumber>2.7.11.1</ecNumber>
    </recommendedName>
    <alternativeName>
        <fullName>90 kDa ribosomal protein S6 kinase 4</fullName>
    </alternativeName>
    <alternativeName>
        <fullName>Nuclear mitogen- and stress-activated protein kinase 2</fullName>
    </alternativeName>
    <alternativeName>
        <fullName>RSK-like protein kinase</fullName>
        <shortName>RLSK</shortName>
    </alternativeName>
</protein>
<reference evidence="11" key="1">
    <citation type="journal article" date="1998" name="EMBO J.">
        <title>Mitogen- and stress-activated protein kinase-1 (MSK1) is directly activated by MAPK and SAPK2/p38, and may mediate activation of CREB.</title>
        <authorList>
            <person name="Deak M."/>
            <person name="Clifton A.D."/>
            <person name="Lucocq J.M."/>
            <person name="Alessi D.R."/>
        </authorList>
    </citation>
    <scope>NUCLEOTIDE SEQUENCE [MRNA]</scope>
</reference>
<reference key="2">
    <citation type="journal article" date="2005" name="Science">
        <title>The transcriptional landscape of the mammalian genome.</title>
        <authorList>
            <person name="Carninci P."/>
            <person name="Kasukawa T."/>
            <person name="Katayama S."/>
            <person name="Gough J."/>
            <person name="Frith M.C."/>
            <person name="Maeda N."/>
            <person name="Oyama R."/>
            <person name="Ravasi T."/>
            <person name="Lenhard B."/>
            <person name="Wells C."/>
            <person name="Kodzius R."/>
            <person name="Shimokawa K."/>
            <person name="Bajic V.B."/>
            <person name="Brenner S.E."/>
            <person name="Batalov S."/>
            <person name="Forrest A.R."/>
            <person name="Zavolan M."/>
            <person name="Davis M.J."/>
            <person name="Wilming L.G."/>
            <person name="Aidinis V."/>
            <person name="Allen J.E."/>
            <person name="Ambesi-Impiombato A."/>
            <person name="Apweiler R."/>
            <person name="Aturaliya R.N."/>
            <person name="Bailey T.L."/>
            <person name="Bansal M."/>
            <person name="Baxter L."/>
            <person name="Beisel K.W."/>
            <person name="Bersano T."/>
            <person name="Bono H."/>
            <person name="Chalk A.M."/>
            <person name="Chiu K.P."/>
            <person name="Choudhary V."/>
            <person name="Christoffels A."/>
            <person name="Clutterbuck D.R."/>
            <person name="Crowe M.L."/>
            <person name="Dalla E."/>
            <person name="Dalrymple B.P."/>
            <person name="de Bono B."/>
            <person name="Della Gatta G."/>
            <person name="di Bernardo D."/>
            <person name="Down T."/>
            <person name="Engstrom P."/>
            <person name="Fagiolini M."/>
            <person name="Faulkner G."/>
            <person name="Fletcher C.F."/>
            <person name="Fukushima T."/>
            <person name="Furuno M."/>
            <person name="Futaki S."/>
            <person name="Gariboldi M."/>
            <person name="Georgii-Hemming P."/>
            <person name="Gingeras T.R."/>
            <person name="Gojobori T."/>
            <person name="Green R.E."/>
            <person name="Gustincich S."/>
            <person name="Harbers M."/>
            <person name="Hayashi Y."/>
            <person name="Hensch T.K."/>
            <person name="Hirokawa N."/>
            <person name="Hill D."/>
            <person name="Huminiecki L."/>
            <person name="Iacono M."/>
            <person name="Ikeo K."/>
            <person name="Iwama A."/>
            <person name="Ishikawa T."/>
            <person name="Jakt M."/>
            <person name="Kanapin A."/>
            <person name="Katoh M."/>
            <person name="Kawasawa Y."/>
            <person name="Kelso J."/>
            <person name="Kitamura H."/>
            <person name="Kitano H."/>
            <person name="Kollias G."/>
            <person name="Krishnan S.P."/>
            <person name="Kruger A."/>
            <person name="Kummerfeld S.K."/>
            <person name="Kurochkin I.V."/>
            <person name="Lareau L.F."/>
            <person name="Lazarevic D."/>
            <person name="Lipovich L."/>
            <person name="Liu J."/>
            <person name="Liuni S."/>
            <person name="McWilliam S."/>
            <person name="Madan Babu M."/>
            <person name="Madera M."/>
            <person name="Marchionni L."/>
            <person name="Matsuda H."/>
            <person name="Matsuzawa S."/>
            <person name="Miki H."/>
            <person name="Mignone F."/>
            <person name="Miyake S."/>
            <person name="Morris K."/>
            <person name="Mottagui-Tabar S."/>
            <person name="Mulder N."/>
            <person name="Nakano N."/>
            <person name="Nakauchi H."/>
            <person name="Ng P."/>
            <person name="Nilsson R."/>
            <person name="Nishiguchi S."/>
            <person name="Nishikawa S."/>
            <person name="Nori F."/>
            <person name="Ohara O."/>
            <person name="Okazaki Y."/>
            <person name="Orlando V."/>
            <person name="Pang K.C."/>
            <person name="Pavan W.J."/>
            <person name="Pavesi G."/>
            <person name="Pesole G."/>
            <person name="Petrovsky N."/>
            <person name="Piazza S."/>
            <person name="Reed J."/>
            <person name="Reid J.F."/>
            <person name="Ring B.Z."/>
            <person name="Ringwald M."/>
            <person name="Rost B."/>
            <person name="Ruan Y."/>
            <person name="Salzberg S.L."/>
            <person name="Sandelin A."/>
            <person name="Schneider C."/>
            <person name="Schoenbach C."/>
            <person name="Sekiguchi K."/>
            <person name="Semple C.A."/>
            <person name="Seno S."/>
            <person name="Sessa L."/>
            <person name="Sheng Y."/>
            <person name="Shibata Y."/>
            <person name="Shimada H."/>
            <person name="Shimada K."/>
            <person name="Silva D."/>
            <person name="Sinclair B."/>
            <person name="Sperling S."/>
            <person name="Stupka E."/>
            <person name="Sugiura K."/>
            <person name="Sultana R."/>
            <person name="Takenaka Y."/>
            <person name="Taki K."/>
            <person name="Tammoja K."/>
            <person name="Tan S.L."/>
            <person name="Tang S."/>
            <person name="Taylor M.S."/>
            <person name="Tegner J."/>
            <person name="Teichmann S.A."/>
            <person name="Ueda H.R."/>
            <person name="van Nimwegen E."/>
            <person name="Verardo R."/>
            <person name="Wei C.L."/>
            <person name="Yagi K."/>
            <person name="Yamanishi H."/>
            <person name="Zabarovsky E."/>
            <person name="Zhu S."/>
            <person name="Zimmer A."/>
            <person name="Hide W."/>
            <person name="Bult C."/>
            <person name="Grimmond S.M."/>
            <person name="Teasdale R.D."/>
            <person name="Liu E.T."/>
            <person name="Brusic V."/>
            <person name="Quackenbush J."/>
            <person name="Wahlestedt C."/>
            <person name="Mattick J.S."/>
            <person name="Hume D.A."/>
            <person name="Kai C."/>
            <person name="Sasaki D."/>
            <person name="Tomaru Y."/>
            <person name="Fukuda S."/>
            <person name="Kanamori-Katayama M."/>
            <person name="Suzuki M."/>
            <person name="Aoki J."/>
            <person name="Arakawa T."/>
            <person name="Iida J."/>
            <person name="Imamura K."/>
            <person name="Itoh M."/>
            <person name="Kato T."/>
            <person name="Kawaji H."/>
            <person name="Kawagashira N."/>
            <person name="Kawashima T."/>
            <person name="Kojima M."/>
            <person name="Kondo S."/>
            <person name="Konno H."/>
            <person name="Nakano K."/>
            <person name="Ninomiya N."/>
            <person name="Nishio T."/>
            <person name="Okada M."/>
            <person name="Plessy C."/>
            <person name="Shibata K."/>
            <person name="Shiraki T."/>
            <person name="Suzuki S."/>
            <person name="Tagami M."/>
            <person name="Waki K."/>
            <person name="Watahiki A."/>
            <person name="Okamura-Oho Y."/>
            <person name="Suzuki H."/>
            <person name="Kawai J."/>
            <person name="Hayashizaki Y."/>
        </authorList>
    </citation>
    <scope>NUCLEOTIDE SEQUENCE [LARGE SCALE MRNA]</scope>
    <source>
        <strain>NOD</strain>
    </source>
</reference>
<reference evidence="10" key="3">
    <citation type="journal article" date="2004" name="Genome Res.">
        <title>The status, quality, and expansion of the NIH full-length cDNA project: the Mammalian Gene Collection (MGC).</title>
        <authorList>
            <consortium name="The MGC Project Team"/>
        </authorList>
    </citation>
    <scope>NUCLEOTIDE SEQUENCE [LARGE SCALE MRNA]</scope>
    <source>
        <tissue evidence="12">Liver</tissue>
    </source>
</reference>
<reference key="4">
    <citation type="journal article" date="2002" name="Mol. Cell. Biol.">
        <title>MSK1 and MSK2 are required for the mitogen- and stress-induced phosphorylation of CREB and ATF1 in fibroblasts.</title>
        <authorList>
            <person name="Wiggin G.R."/>
            <person name="Soloaga A."/>
            <person name="Foster J.M."/>
            <person name="Murray-Tait V."/>
            <person name="Cohen P."/>
            <person name="Arthur J.S."/>
        </authorList>
    </citation>
    <scope>FUNCTION IN PHOSPHORYLATION OF CREB1 AND ATF1</scope>
</reference>
<reference key="5">
    <citation type="journal article" date="2006" name="J. Biol. Chem.">
        <title>The kinases MSK1 and MSK2 are required for epidermal growth factor-induced, but not tumor necrosis factor-induced, histone H3 Ser10 phosphorylation.</title>
        <authorList>
            <person name="Duncan E.A."/>
            <person name="Anest V."/>
            <person name="Cogswell P."/>
            <person name="Baldwin A.S."/>
        </authorList>
    </citation>
    <scope>FUNCTION IN PHOSPHORYLATION OF HISTONE H3</scope>
</reference>
<reference key="6">
    <citation type="journal article" date="2008" name="Nat. Immunol.">
        <title>The kinases MSK1 and MSK2 act as negative regulators of Toll-like receptor signaling.</title>
        <authorList>
            <person name="Ananieva O."/>
            <person name="Darragh J."/>
            <person name="Johansen C."/>
            <person name="Carr J.M."/>
            <person name="McIlrath J."/>
            <person name="Park J.M."/>
            <person name="Wingate A."/>
            <person name="Monk C.E."/>
            <person name="Toth R."/>
            <person name="Santos S.G."/>
            <person name="Iversen L."/>
            <person name="Arthur J.S."/>
        </authorList>
    </citation>
    <scope>FUNCTION IN PHOSPHORYLATION OF CREB1; ATF1 AND HISTONE H3</scope>
</reference>
<reference key="7">
    <citation type="journal article" date="2010" name="Cell">
        <title>A tissue-specific atlas of mouse protein phosphorylation and expression.</title>
        <authorList>
            <person name="Huttlin E.L."/>
            <person name="Jedrychowski M.P."/>
            <person name="Elias J.E."/>
            <person name="Goswami T."/>
            <person name="Rad R."/>
            <person name="Beausoleil S.A."/>
            <person name="Villen J."/>
            <person name="Haas W."/>
            <person name="Sowa M.E."/>
            <person name="Gygi S.P."/>
        </authorList>
    </citation>
    <scope>PHOSPHORYLATION [LARGE SCALE ANALYSIS] AT THR-687</scope>
    <scope>IDENTIFICATION BY MASS SPECTROMETRY [LARGE SCALE ANALYSIS]</scope>
    <source>
        <tissue>Brown adipose tissue</tissue>
        <tissue>Heart</tissue>
        <tissue>Kidney</tissue>
        <tissue>Liver</tissue>
        <tissue>Lung</tissue>
        <tissue>Spleen</tissue>
    </source>
</reference>
<proteinExistence type="evidence at protein level"/>
<evidence type="ECO:0000250" key="1"/>
<evidence type="ECO:0000250" key="2">
    <source>
        <dbReference type="UniProtKB" id="O75582"/>
    </source>
</evidence>
<evidence type="ECO:0000250" key="3">
    <source>
        <dbReference type="UniProtKB" id="O75676"/>
    </source>
</evidence>
<evidence type="ECO:0000255" key="4">
    <source>
        <dbReference type="PROSITE-ProRule" id="PRU00159"/>
    </source>
</evidence>
<evidence type="ECO:0000255" key="5">
    <source>
        <dbReference type="PROSITE-ProRule" id="PRU00618"/>
    </source>
</evidence>
<evidence type="ECO:0000256" key="6">
    <source>
        <dbReference type="SAM" id="MobiDB-lite"/>
    </source>
</evidence>
<evidence type="ECO:0000269" key="7">
    <source>
    </source>
</evidence>
<evidence type="ECO:0000269" key="8">
    <source>
    </source>
</evidence>
<evidence type="ECO:0000269" key="9">
    <source>
    </source>
</evidence>
<evidence type="ECO:0000305" key="10"/>
<evidence type="ECO:0000312" key="11">
    <source>
        <dbReference type="EMBL" id="AAC67394.1"/>
    </source>
</evidence>
<evidence type="ECO:0000312" key="12">
    <source>
        <dbReference type="EMBL" id="AAH12964.1"/>
    </source>
</evidence>
<evidence type="ECO:0007744" key="13">
    <source>
    </source>
</evidence>
<comment type="function">
    <text evidence="1 7 8 9">Serine/threonine-protein kinase that is required for the mitogen or stress-induced phosphorylation of the transcription factors CREB1 and ATF1 and for the regulation of the transcription factor RELA, and that contributes to gene activation by histone phosphorylation and functions in the regulation of inflammatory genes. Phosphorylates CREB1 and ATF1 in response to mitogenic or stress stimuli such as UV-C irradiation, epidermal growth factor (EGF) and anisomycin. Plays an essential role in the control of RELA transcriptional activity in response to TNF. Phosphorylates 'Ser-10' of histone H3 in response to mitogenics, stress stimuli and EGF, which results in the transcriptional activation of several immediate early genes, including proto-oncogenes c-fos/FOS and c-jun/JUN. May also phosphorylate 'Ser-28' of histone H3. Mediates the mitogen- and stress-induced phosphorylation of high mobility group protein 1 (HMGN1/HMG14). In lipopolysaccharide-stimulated primary macrophages, acts downstream of the Toll-like receptor TLR4 to limit the production of pro-inflammatory cytokines. Functions probably by inducing transcription of the MAP kinase phosphatase DUSP1 and the anti-inflammatory cytokine interleukin 10 (IL10), via CREB1 and ATF1 transcription factors (By similarity).</text>
</comment>
<comment type="catalytic activity">
    <reaction evidence="2">
        <text>L-seryl-[protein] + ATP = O-phospho-L-seryl-[protein] + ADP + H(+)</text>
        <dbReference type="Rhea" id="RHEA:17989"/>
        <dbReference type="Rhea" id="RHEA-COMP:9863"/>
        <dbReference type="Rhea" id="RHEA-COMP:11604"/>
        <dbReference type="ChEBI" id="CHEBI:15378"/>
        <dbReference type="ChEBI" id="CHEBI:29999"/>
        <dbReference type="ChEBI" id="CHEBI:30616"/>
        <dbReference type="ChEBI" id="CHEBI:83421"/>
        <dbReference type="ChEBI" id="CHEBI:456216"/>
        <dbReference type="EC" id="2.7.11.1"/>
    </reaction>
</comment>
<comment type="catalytic activity">
    <reaction evidence="2">
        <text>L-threonyl-[protein] + ATP = O-phospho-L-threonyl-[protein] + ADP + H(+)</text>
        <dbReference type="Rhea" id="RHEA:46608"/>
        <dbReference type="Rhea" id="RHEA-COMP:11060"/>
        <dbReference type="Rhea" id="RHEA-COMP:11605"/>
        <dbReference type="ChEBI" id="CHEBI:15378"/>
        <dbReference type="ChEBI" id="CHEBI:30013"/>
        <dbReference type="ChEBI" id="CHEBI:30616"/>
        <dbReference type="ChEBI" id="CHEBI:61977"/>
        <dbReference type="ChEBI" id="CHEBI:456216"/>
        <dbReference type="EC" id="2.7.11.1"/>
    </reaction>
</comment>
<comment type="cofactor">
    <cofactor evidence="2">
        <name>Mg(2+)</name>
        <dbReference type="ChEBI" id="CHEBI:18420"/>
    </cofactor>
</comment>
<comment type="activity regulation">
    <text evidence="1">Activated by phosphorylation at Ser-343, Thr-568 and Thr-687 by MAPK1/ERK2, MAPK3/ERK1 and MAPK14/p38-alpha, and by further autophosphorylation of Ser-196, Ser-360 and Ser-365 by the activated C-terminal kinase domain.</text>
</comment>
<comment type="subunit">
    <text evidence="1">Forms a complex with either MAPK1/ERK2 or MAPK3/ERK1 in quiescent cells which transiently dissociates following mitogenic stimulation. Also associates with MAPK14/p38-alpha. Activated RPS6KA4 associates with and phosphorylates the NF-kappa-B p65 subunit RELA (By similarity).</text>
</comment>
<comment type="interaction">
    <interactant intactId="EBI-412887">
        <id>Q9Z2B9</id>
    </interactant>
    <interactant intactId="EBI-397697">
        <id>P63085</id>
        <label>Mapk1</label>
    </interactant>
    <organismsDiffer>false</organismsDiffer>
    <experiments>3</experiments>
</comment>
<comment type="subcellular location">
    <subcellularLocation>
        <location evidence="1">Nucleus</location>
    </subcellularLocation>
</comment>
<comment type="PTM">
    <text evidence="1">Ser-343 and Thr-568 phosphorylation is required for kinase activity. Ser-343 and Ser-196 are autophosphorylated by the C-terminal kinase domain, and their phosphorylation is essential for the catalytic activity of the N-terminal kinase domain. Phosphorylated at Ser-343, Thr-568 and Thr-687 by MAPK1/ERK2, MAPK3/ERK1 and MAPK14/p38-alpha. Autophosphorylated at Ser-737 and Ser-745 by the N-terminal kinase domain (By similarity).</text>
</comment>
<comment type="miscellaneous">
    <text evidence="2">Enzyme activity requires the presence of both kinase domains.</text>
</comment>
<comment type="similarity">
    <text evidence="10">Belongs to the protein kinase superfamily. AGC Ser/Thr protein kinase family. S6 kinase subfamily.</text>
</comment>
<dbReference type="EC" id="2.7.11.1"/>
<dbReference type="EMBL" id="AF074714">
    <property type="protein sequence ID" value="AAC67394.1"/>
    <property type="molecule type" value="mRNA"/>
</dbReference>
<dbReference type="EMBL" id="AK154674">
    <property type="protein sequence ID" value="BAE32757.1"/>
    <property type="molecule type" value="mRNA"/>
</dbReference>
<dbReference type="EMBL" id="BC012964">
    <property type="protein sequence ID" value="AAH12964.1"/>
    <property type="molecule type" value="mRNA"/>
</dbReference>
<dbReference type="CCDS" id="CCDS37899.1"/>
<dbReference type="RefSeq" id="NP_064308.2">
    <property type="nucleotide sequence ID" value="NM_019924.2"/>
</dbReference>
<dbReference type="SMR" id="Q9Z2B9"/>
<dbReference type="BioGRID" id="208103">
    <property type="interactions" value="1"/>
</dbReference>
<dbReference type="FunCoup" id="Q9Z2B9">
    <property type="interactions" value="2053"/>
</dbReference>
<dbReference type="IntAct" id="Q9Z2B9">
    <property type="interactions" value="2"/>
</dbReference>
<dbReference type="STRING" id="10090.ENSMUSP00000025903"/>
<dbReference type="iPTMnet" id="Q9Z2B9"/>
<dbReference type="PhosphoSitePlus" id="Q9Z2B9"/>
<dbReference type="SwissPalm" id="Q9Z2B9"/>
<dbReference type="jPOST" id="Q9Z2B9"/>
<dbReference type="PaxDb" id="10090-ENSMUSP00000025903"/>
<dbReference type="PeptideAtlas" id="Q9Z2B9"/>
<dbReference type="ProteomicsDB" id="263567"/>
<dbReference type="Pumba" id="Q9Z2B9"/>
<dbReference type="Antibodypedia" id="3272">
    <property type="antibodies" value="276 antibodies from 32 providers"/>
</dbReference>
<dbReference type="DNASU" id="56613"/>
<dbReference type="Ensembl" id="ENSMUST00000239527.1">
    <property type="protein sequence ID" value="ENSMUSP00000159422.2"/>
    <property type="gene ID" value="ENSMUSG00000118668.1"/>
</dbReference>
<dbReference type="GeneID" id="56613"/>
<dbReference type="KEGG" id="mmu:56613"/>
<dbReference type="UCSC" id="uc008gja.2">
    <property type="organism name" value="mouse"/>
</dbReference>
<dbReference type="AGR" id="MGI:1930076"/>
<dbReference type="CTD" id="8986"/>
<dbReference type="MGI" id="MGI:1930076">
    <property type="gene designation" value="Rps6ka4"/>
</dbReference>
<dbReference type="VEuPathDB" id="HostDB:ENSMUSG00000024952"/>
<dbReference type="eggNOG" id="KOG0603">
    <property type="taxonomic scope" value="Eukaryota"/>
</dbReference>
<dbReference type="GeneTree" id="ENSGT00940000161083"/>
<dbReference type="HOGENOM" id="CLU_000288_58_0_1"/>
<dbReference type="InParanoid" id="Q9Z2B9"/>
<dbReference type="OMA" id="DVFTDQY"/>
<dbReference type="OrthoDB" id="6764942at2759"/>
<dbReference type="PhylomeDB" id="Q9Z2B9"/>
<dbReference type="TreeFam" id="TF313438"/>
<dbReference type="BioGRID-ORCS" id="56613">
    <property type="hits" value="4 hits in 82 CRISPR screens"/>
</dbReference>
<dbReference type="PRO" id="PR:Q9Z2B9"/>
<dbReference type="Proteomes" id="UP000000589">
    <property type="component" value="Chromosome 19"/>
</dbReference>
<dbReference type="RNAct" id="Q9Z2B9">
    <property type="molecule type" value="protein"/>
</dbReference>
<dbReference type="ExpressionAtlas" id="Q9Z2B9">
    <property type="expression patterns" value="baseline and differential"/>
</dbReference>
<dbReference type="GO" id="GO:0005829">
    <property type="term" value="C:cytosol"/>
    <property type="evidence" value="ECO:0007669"/>
    <property type="project" value="Ensembl"/>
</dbReference>
<dbReference type="GO" id="GO:0005654">
    <property type="term" value="C:nucleoplasm"/>
    <property type="evidence" value="ECO:0007669"/>
    <property type="project" value="Ensembl"/>
</dbReference>
<dbReference type="GO" id="GO:0005634">
    <property type="term" value="C:nucleus"/>
    <property type="evidence" value="ECO:0000250"/>
    <property type="project" value="UniProtKB"/>
</dbReference>
<dbReference type="GO" id="GO:0045202">
    <property type="term" value="C:synapse"/>
    <property type="evidence" value="ECO:0000314"/>
    <property type="project" value="SynGO"/>
</dbReference>
<dbReference type="GO" id="GO:0005524">
    <property type="term" value="F:ATP binding"/>
    <property type="evidence" value="ECO:0000250"/>
    <property type="project" value="UniProtKB"/>
</dbReference>
<dbReference type="GO" id="GO:0035175">
    <property type="term" value="F:histone H3S10 kinase activity"/>
    <property type="evidence" value="ECO:0000250"/>
    <property type="project" value="UniProtKB"/>
</dbReference>
<dbReference type="GO" id="GO:0044022">
    <property type="term" value="F:histone H3S28 kinase activity"/>
    <property type="evidence" value="ECO:0000250"/>
    <property type="project" value="UniProtKB"/>
</dbReference>
<dbReference type="GO" id="GO:0000287">
    <property type="term" value="F:magnesium ion binding"/>
    <property type="evidence" value="ECO:0007669"/>
    <property type="project" value="InterPro"/>
</dbReference>
<dbReference type="GO" id="GO:0106310">
    <property type="term" value="F:protein serine kinase activity"/>
    <property type="evidence" value="ECO:0007669"/>
    <property type="project" value="RHEA"/>
</dbReference>
<dbReference type="GO" id="GO:0004674">
    <property type="term" value="F:protein serine/threonine kinase activity"/>
    <property type="evidence" value="ECO:0000250"/>
    <property type="project" value="UniProtKB"/>
</dbReference>
<dbReference type="GO" id="GO:0006954">
    <property type="term" value="P:inflammatory response"/>
    <property type="evidence" value="ECO:0007669"/>
    <property type="project" value="UniProtKB-KW"/>
</dbReference>
<dbReference type="GO" id="GO:0070498">
    <property type="term" value="P:interleukin-1-mediated signaling pathway"/>
    <property type="evidence" value="ECO:0007669"/>
    <property type="project" value="Ensembl"/>
</dbReference>
<dbReference type="GO" id="GO:0035556">
    <property type="term" value="P:intracellular signal transduction"/>
    <property type="evidence" value="ECO:0000250"/>
    <property type="project" value="UniProtKB"/>
</dbReference>
<dbReference type="GO" id="GO:0045944">
    <property type="term" value="P:positive regulation of transcription by RNA polymerase II"/>
    <property type="evidence" value="ECO:0007669"/>
    <property type="project" value="Ensembl"/>
</dbReference>
<dbReference type="GO" id="GO:0043687">
    <property type="term" value="P:post-translational protein modification"/>
    <property type="evidence" value="ECO:0000250"/>
    <property type="project" value="UniProtKB"/>
</dbReference>
<dbReference type="GO" id="GO:0006468">
    <property type="term" value="P:protein phosphorylation"/>
    <property type="evidence" value="ECO:0000250"/>
    <property type="project" value="UniProtKB"/>
</dbReference>
<dbReference type="GO" id="GO:0006355">
    <property type="term" value="P:regulation of DNA-templated transcription"/>
    <property type="evidence" value="ECO:0000250"/>
    <property type="project" value="UniProtKB"/>
</dbReference>
<dbReference type="CDD" id="cd14180">
    <property type="entry name" value="STKc_MSK2_C"/>
    <property type="match status" value="1"/>
</dbReference>
<dbReference type="CDD" id="cd05614">
    <property type="entry name" value="STKc_MSK2_N"/>
    <property type="match status" value="1"/>
</dbReference>
<dbReference type="FunFam" id="1.10.510.10:FF:000109">
    <property type="entry name" value="Ribosomal protein S6 kinase"/>
    <property type="match status" value="1"/>
</dbReference>
<dbReference type="FunFam" id="1.10.510.10:FF:000157">
    <property type="entry name" value="Ribosomal protein S6 kinase"/>
    <property type="match status" value="1"/>
</dbReference>
<dbReference type="FunFam" id="3.30.200.20:FF:000208">
    <property type="entry name" value="Ribosomal protein S6 kinase"/>
    <property type="match status" value="1"/>
</dbReference>
<dbReference type="FunFam" id="3.30.200.20:FF:000686">
    <property type="entry name" value="Ribosomal protein S6 kinase"/>
    <property type="match status" value="1"/>
</dbReference>
<dbReference type="Gene3D" id="3.30.200.20">
    <property type="entry name" value="Phosphorylase Kinase, domain 1"/>
    <property type="match status" value="2"/>
</dbReference>
<dbReference type="Gene3D" id="1.10.510.10">
    <property type="entry name" value="Transferase(Phosphotransferase) domain 1"/>
    <property type="match status" value="2"/>
</dbReference>
<dbReference type="InterPro" id="IPR000961">
    <property type="entry name" value="AGC-kinase_C"/>
</dbReference>
<dbReference type="InterPro" id="IPR011009">
    <property type="entry name" value="Kinase-like_dom_sf"/>
</dbReference>
<dbReference type="InterPro" id="IPR037714">
    <property type="entry name" value="MSK2_N_dom"/>
</dbReference>
<dbReference type="InterPro" id="IPR017892">
    <property type="entry name" value="Pkinase_C"/>
</dbReference>
<dbReference type="InterPro" id="IPR000719">
    <property type="entry name" value="Prot_kinase_dom"/>
</dbReference>
<dbReference type="InterPro" id="IPR017441">
    <property type="entry name" value="Protein_kinase_ATP_BS"/>
</dbReference>
<dbReference type="InterPro" id="IPR016239">
    <property type="entry name" value="Ribosomal_S6_kinase_II"/>
</dbReference>
<dbReference type="InterPro" id="IPR008271">
    <property type="entry name" value="Ser/Thr_kinase_AS"/>
</dbReference>
<dbReference type="PANTHER" id="PTHR24351">
    <property type="entry name" value="RIBOSOMAL PROTEIN S6 KINASE"/>
    <property type="match status" value="1"/>
</dbReference>
<dbReference type="Pfam" id="PF00069">
    <property type="entry name" value="Pkinase"/>
    <property type="match status" value="2"/>
</dbReference>
<dbReference type="Pfam" id="PF00433">
    <property type="entry name" value="Pkinase_C"/>
    <property type="match status" value="1"/>
</dbReference>
<dbReference type="PIRSF" id="PIRSF000606">
    <property type="entry name" value="Ribsml_S6_kin_2"/>
    <property type="match status" value="1"/>
</dbReference>
<dbReference type="SMART" id="SM00133">
    <property type="entry name" value="S_TK_X"/>
    <property type="match status" value="1"/>
</dbReference>
<dbReference type="SMART" id="SM00220">
    <property type="entry name" value="S_TKc"/>
    <property type="match status" value="2"/>
</dbReference>
<dbReference type="SUPFAM" id="SSF56112">
    <property type="entry name" value="Protein kinase-like (PK-like)"/>
    <property type="match status" value="2"/>
</dbReference>
<dbReference type="PROSITE" id="PS51285">
    <property type="entry name" value="AGC_KINASE_CTER"/>
    <property type="match status" value="1"/>
</dbReference>
<dbReference type="PROSITE" id="PS00107">
    <property type="entry name" value="PROTEIN_KINASE_ATP"/>
    <property type="match status" value="2"/>
</dbReference>
<dbReference type="PROSITE" id="PS50011">
    <property type="entry name" value="PROTEIN_KINASE_DOM"/>
    <property type="match status" value="2"/>
</dbReference>
<dbReference type="PROSITE" id="PS00108">
    <property type="entry name" value="PROTEIN_KINASE_ST"/>
    <property type="match status" value="2"/>
</dbReference>
<sequence length="773" mass="85652">MGDEDEDEGCAVELQITEANLTGHEEKVSVENFALLKVLGTGAYGKVFLVRKTGGHDAGKLYAMKVLRKAALVQRAKTQEHTRTERSVLELVRQAPFLVTLHYAFQTDAKLHLILDYVSGGEMFTHLYQRQYFKEAEVRVYGGEIVLALEHLHKLGIIYRDLKLENVLLDSEGHIVLTDFGLSKEFLTEEKERTFSFCGTIEYMAPEIIRSKAGHGKAVDWWSLGILLFELLTGASPFTLEGERNTQAEVSRRILKCSPPFPLRIGPVAQDLLQRLLCKDPKKRLGAGPQGAQEVKSHPFFQGLDWVALAARKIPAPFRPQIRSELDVGNFAEEFTRLEPVYSPAGSPPPGDPRIFQGYSFVAPSILFDHNNAVMADVLQAPGAGYRPGRAAVARSAMMQDSPFFQQYELDLREPALGQGSFSVCRRCRQRQSGQEFAVKILSRRLEENTQREVAALRLCQSHPNVVNLHEVLHDQLHTYLVLELLRGGELLEHIRKKRLFSESEASQILRSLVSAVSFMHEEAGVVHRDLKPENILYADDTPGAPVKIIDFGFARLRPQSPAEPMQTPCFTLQYAAPELLAQQGYDESCDLWSLGVILYMMLSGQVPFQGASGQGGQSQAAEIMCKIREGRFSLDGEAWQGVSEEAKELVRGLLTVDPAKRLKLEGLRSSSWLQDGSARSSPPLRTPDVLESSGPAVRSGLNATFMAFNRGKREGFFLKSVENAPLAKRRKQKLRSAAASRRGSPVPASSGRLPASAAKGTTRRANGPLSPS</sequence>
<organism evidence="11">
    <name type="scientific">Mus musculus</name>
    <name type="common">Mouse</name>
    <dbReference type="NCBI Taxonomy" id="10090"/>
    <lineage>
        <taxon>Eukaryota</taxon>
        <taxon>Metazoa</taxon>
        <taxon>Chordata</taxon>
        <taxon>Craniata</taxon>
        <taxon>Vertebrata</taxon>
        <taxon>Euteleostomi</taxon>
        <taxon>Mammalia</taxon>
        <taxon>Eutheria</taxon>
        <taxon>Euarchontoglires</taxon>
        <taxon>Glires</taxon>
        <taxon>Rodentia</taxon>
        <taxon>Myomorpha</taxon>
        <taxon>Muroidea</taxon>
        <taxon>Muridae</taxon>
        <taxon>Murinae</taxon>
        <taxon>Mus</taxon>
        <taxon>Mus</taxon>
    </lineage>
</organism>